<organism>
    <name type="scientific">Staphylococcus aureus (strain COL)</name>
    <dbReference type="NCBI Taxonomy" id="93062"/>
    <lineage>
        <taxon>Bacteria</taxon>
        <taxon>Bacillati</taxon>
        <taxon>Bacillota</taxon>
        <taxon>Bacilli</taxon>
        <taxon>Bacillales</taxon>
        <taxon>Staphylococcaceae</taxon>
        <taxon>Staphylococcus</taxon>
    </lineage>
</organism>
<proteinExistence type="inferred from homology"/>
<comment type="subunit">
    <text evidence="1">Homotetramer.</text>
</comment>
<name>SSB2_STAAC</name>
<sequence>MLNRTVLVGRLTKDPELRSTPNGVNVGTFTLAVNRTFTNAQGEREADFINVVVFKKQAENVKNYLSKGSLAGVDGRLQTRSYDNKEGRRVFVTEVVADSVQFLEPKNNNKQNNQQHNGQTQTGNNPFDNTEEDFSDLPF</sequence>
<dbReference type="EMBL" id="CP000046">
    <property type="protein sequence ID" value="AAW37546.1"/>
    <property type="molecule type" value="Genomic_DNA"/>
</dbReference>
<dbReference type="SMR" id="Q5HJ26"/>
<dbReference type="KEGG" id="sac:SACOL0339"/>
<dbReference type="HOGENOM" id="CLU_078758_6_2_9"/>
<dbReference type="Proteomes" id="UP000000530">
    <property type="component" value="Chromosome"/>
</dbReference>
<dbReference type="GO" id="GO:0009295">
    <property type="term" value="C:nucleoid"/>
    <property type="evidence" value="ECO:0007669"/>
    <property type="project" value="TreeGrafter"/>
</dbReference>
<dbReference type="GO" id="GO:0003697">
    <property type="term" value="F:single-stranded DNA binding"/>
    <property type="evidence" value="ECO:0007669"/>
    <property type="project" value="UniProtKB-UniRule"/>
</dbReference>
<dbReference type="GO" id="GO:0006260">
    <property type="term" value="P:DNA replication"/>
    <property type="evidence" value="ECO:0007669"/>
    <property type="project" value="InterPro"/>
</dbReference>
<dbReference type="CDD" id="cd04496">
    <property type="entry name" value="SSB_OBF"/>
    <property type="match status" value="1"/>
</dbReference>
<dbReference type="FunFam" id="2.40.50.140:FF:000084">
    <property type="entry name" value="Single-stranded DNA-binding protein"/>
    <property type="match status" value="1"/>
</dbReference>
<dbReference type="Gene3D" id="2.40.50.140">
    <property type="entry name" value="Nucleic acid-binding proteins"/>
    <property type="match status" value="1"/>
</dbReference>
<dbReference type="HAMAP" id="MF_00984">
    <property type="entry name" value="SSB"/>
    <property type="match status" value="1"/>
</dbReference>
<dbReference type="InterPro" id="IPR012340">
    <property type="entry name" value="NA-bd_OB-fold"/>
</dbReference>
<dbReference type="InterPro" id="IPR000424">
    <property type="entry name" value="Primosome_PriB/ssb"/>
</dbReference>
<dbReference type="InterPro" id="IPR011344">
    <property type="entry name" value="ssDNA-bd"/>
</dbReference>
<dbReference type="NCBIfam" id="TIGR00621">
    <property type="entry name" value="ssb"/>
    <property type="match status" value="1"/>
</dbReference>
<dbReference type="PANTHER" id="PTHR10302">
    <property type="entry name" value="SINGLE-STRANDED DNA-BINDING PROTEIN"/>
    <property type="match status" value="1"/>
</dbReference>
<dbReference type="PANTHER" id="PTHR10302:SF27">
    <property type="entry name" value="SINGLE-STRANDED DNA-BINDING PROTEIN"/>
    <property type="match status" value="1"/>
</dbReference>
<dbReference type="Pfam" id="PF00436">
    <property type="entry name" value="SSB"/>
    <property type="match status" value="1"/>
</dbReference>
<dbReference type="PIRSF" id="PIRSF002070">
    <property type="entry name" value="SSB"/>
    <property type="match status" value="1"/>
</dbReference>
<dbReference type="SUPFAM" id="SSF50249">
    <property type="entry name" value="Nucleic acid-binding proteins"/>
    <property type="match status" value="1"/>
</dbReference>
<dbReference type="PROSITE" id="PS50935">
    <property type="entry name" value="SSB"/>
    <property type="match status" value="1"/>
</dbReference>
<accession>Q5HJ26</accession>
<keyword id="KW-0238">DNA-binding</keyword>
<gene>
    <name type="primary">ssb-p</name>
    <name type="ordered locus">SACOL0339</name>
</gene>
<feature type="chain" id="PRO_0000096097" description="Single-stranded DNA-binding protein 2">
    <location>
        <begin position="1"/>
        <end position="139"/>
    </location>
</feature>
<feature type="domain" description="SSB" evidence="1">
    <location>
        <begin position="1"/>
        <end position="104"/>
    </location>
</feature>
<feature type="region of interest" description="Disordered" evidence="2">
    <location>
        <begin position="103"/>
        <end position="139"/>
    </location>
</feature>
<feature type="compositionally biased region" description="Low complexity" evidence="2">
    <location>
        <begin position="106"/>
        <end position="125"/>
    </location>
</feature>
<feature type="compositionally biased region" description="Acidic residues" evidence="2">
    <location>
        <begin position="129"/>
        <end position="139"/>
    </location>
</feature>
<protein>
    <recommendedName>
        <fullName evidence="1">Single-stranded DNA-binding protein 2</fullName>
        <shortName evidence="1">SSB 2</shortName>
    </recommendedName>
</protein>
<reference key="1">
    <citation type="journal article" date="2005" name="J. Bacteriol.">
        <title>Insights on evolution of virulence and resistance from the complete genome analysis of an early methicillin-resistant Staphylococcus aureus strain and a biofilm-producing methicillin-resistant Staphylococcus epidermidis strain.</title>
        <authorList>
            <person name="Gill S.R."/>
            <person name="Fouts D.E."/>
            <person name="Archer G.L."/>
            <person name="Mongodin E.F."/>
            <person name="DeBoy R.T."/>
            <person name="Ravel J."/>
            <person name="Paulsen I.T."/>
            <person name="Kolonay J.F."/>
            <person name="Brinkac L.M."/>
            <person name="Beanan M.J."/>
            <person name="Dodson R.J."/>
            <person name="Daugherty S.C."/>
            <person name="Madupu R."/>
            <person name="Angiuoli S.V."/>
            <person name="Durkin A.S."/>
            <person name="Haft D.H."/>
            <person name="Vamathevan J.J."/>
            <person name="Khouri H."/>
            <person name="Utterback T.R."/>
            <person name="Lee C."/>
            <person name="Dimitrov G."/>
            <person name="Jiang L."/>
            <person name="Qin H."/>
            <person name="Weidman J."/>
            <person name="Tran K."/>
            <person name="Kang K.H."/>
            <person name="Hance I.R."/>
            <person name="Nelson K.E."/>
            <person name="Fraser C.M."/>
        </authorList>
    </citation>
    <scope>NUCLEOTIDE SEQUENCE [LARGE SCALE GENOMIC DNA]</scope>
    <source>
        <strain>COL</strain>
    </source>
</reference>
<evidence type="ECO:0000255" key="1">
    <source>
        <dbReference type="HAMAP-Rule" id="MF_00984"/>
    </source>
</evidence>
<evidence type="ECO:0000256" key="2">
    <source>
        <dbReference type="SAM" id="MobiDB-lite"/>
    </source>
</evidence>